<feature type="transit peptide" description="Mitochondrion">
    <location>
        <begin position="1"/>
        <end position="41"/>
    </location>
</feature>
<feature type="chain" id="PRO_0000010129" description="Frataxin intermediate form">
    <location>
        <begin position="42"/>
        <end position="210"/>
    </location>
</feature>
<feature type="chain" id="PRO_0000010130" description="Frataxin(56-210)">
    <location>
        <begin position="56"/>
        <end position="210"/>
    </location>
</feature>
<feature type="chain" id="PRO_0000399388" description="Frataxin(78-210)">
    <location>
        <begin position="78"/>
        <end position="210"/>
    </location>
</feature>
<feature type="chain" id="PRO_0000456947" description="Extramitochondrial frataxin">
    <location>
        <begin position="81"/>
        <end position="210"/>
    </location>
</feature>
<feature type="chain" id="PRO_0000289331" description="Frataxin mature form">
    <location>
        <begin position="81"/>
        <end position="210"/>
    </location>
</feature>
<feature type="splice variant" id="VSP_001576" description="In isoform 2." evidence="40">
    <original>SGPKRYDWTGKNWVYSHDGVSLHELLAAELTKALKTKLDLSSLAYSGKDA</original>
    <variation>RLTWLLWLFHP</variation>
    <location>
        <begin position="161"/>
        <end position="210"/>
    </location>
</feature>
<feature type="splice variant" id="VSP_047282" description="In isoform 3." evidence="41">
    <original>SGPKRYDWTGKNWVYSHDGVSLHELLAAELTKALKTKLDLSSLAYSGKDA</original>
    <variation>RYVVDLSVMTGLGKTGCTPTTACPSMSCWPQSSLKP</variation>
    <location>
        <begin position="161"/>
        <end position="210"/>
    </location>
</feature>
<feature type="sequence variant" id="VAR_016065" description="In FRDA; dbSNP:rs104894105." evidence="33">
    <original>L</original>
    <variation>S</variation>
    <location>
        <position position="106"/>
    </location>
</feature>
<feature type="sequence variant" id="VAR_002428" description="In FRDA; does not affect interaction with the core iron-sulfur cluster assembly complex; does not affect mitochondrial localization; does not affect proteolytic processing; dbSNP:rs142157346." evidence="24 34 36 37">
    <original>D</original>
    <variation>Y</variation>
    <location>
        <position position="122"/>
    </location>
</feature>
<feature type="sequence variant" id="VAR_002429" description="In FRDA; does not affect interaction with the core iron-sulfur cluster assembly complex; does not affect mitochondrial localization; does not affect proteolytic processing.; dbSNP:rs104894107." evidence="5 24 30 34">
    <original>G</original>
    <variation>V</variation>
    <location>
        <position position="130"/>
    </location>
</feature>
<feature type="sequence variant" id="VAR_087120" description="In FRDA; reduces interaction with the core iron-sulfur cluster assembly complex; does not affect mitochondrial localization; does not affect proteolytic processing; reduces interaction with LYRM4; the interaction is rescued by nickel; a murine cellular FRDA model, deleted for endogenous frataxin and expressing human mutant frataxin cDNA shows defects in mitochondrial structure, mitochondrial iron deposits, decreased enzymatic activity of some mitochondrial and cytoplasmic iron-sulfur cluster-containing enzymes, increased RNA-binding activity of ACO1 and increased sensitivity to oxidative stress; decreases the level of covalent incorporation of sulfur into both NFS1 and ISCU; dbSNP:rs104894106." evidence="19 22 24 25 29 30">
    <original>I</original>
    <variation>F</variation>
    <location>
        <position position="154"/>
    </location>
</feature>
<feature type="sequence variant" id="VAR_087121" description="In FRDA; reduces interaction with LYRM4; the interaction is rescued by nickel; drastically decreases affinity for the SDAU complex by &gt; 75-fold; decreases the level of covalent incorporation of sulfur into both NFS1 and ISCU; dbSNP:rs138471431." evidence="19 25 28 35">
    <original>W</original>
    <variation>R</variation>
    <location>
        <position position="155"/>
    </location>
</feature>
<feature type="sequence variant" id="VAR_087122" description="In FRDA; mild form; decreases affinity for the SDAU complex by 40-fold; decreases the level of covalent incorporation of sulfur into both NFS1 and ISCU; dbSNP:rs138034837." evidence="5 25 28">
    <original>R</original>
    <variation>C</variation>
    <location>
        <position position="165"/>
    </location>
</feature>
<feature type="sequence variant" id="VAR_008140" description="In FRDA; dbSNP:rs139616452." evidence="5">
    <original>L</original>
    <variation>F</variation>
    <location>
        <position position="182"/>
    </location>
</feature>
<feature type="sequence variant" id="VAR_016066" description="In FRDA; dbSNP:rs144104124." evidence="6">
    <original>L</original>
    <variation>R</variation>
    <location>
        <position position="198"/>
    </location>
</feature>
<feature type="sequence variant" id="VAR_049100" description="In dbSNP:rs1052195.">
    <original>S</original>
    <variation>C</variation>
    <location>
        <position position="202"/>
    </location>
</feature>
<feature type="mutagenesis site" description="Abolishes cleavage to yield frataxin intermediate form and allows accumulation of frataxin(56-210) and frataxin(78-210)." evidence="21">
    <original>RR</original>
    <variation>GG</variation>
    <location>
        <begin position="39"/>
        <end position="40"/>
    </location>
</feature>
<feature type="mutagenesis site" description="No effect on processing of wild-type FXN." evidence="20 21">
    <original>RR</original>
    <variation>GG</variation>
    <location>
        <begin position="53"/>
        <end position="54"/>
    </location>
</feature>
<feature type="mutagenesis site" description="Abolishes cleavage to yield frataxin mature form and allows accumulation of frataxin(56-210) and frataxin(78-210)." evidence="21">
    <original>LR</original>
    <variation>GG</variation>
    <location>
        <begin position="78"/>
        <end position="79"/>
    </location>
</feature>
<feature type="mutagenesis site" description="Abolishes cleavage to yield frataxin mature form and allows the accumulation of frataxin(56-210)." evidence="20 21">
    <original>RK</original>
    <variation>GG</variation>
    <location>
        <begin position="79"/>
        <end position="80"/>
    </location>
</feature>
<feature type="mutagenesis site" description="Does not affect interaction with the core iron-sulfur cluster assembly complex. Does not affect mitochondrial localization. Does not affect proteolytic processing." evidence="24">
    <original>E</original>
    <variation>K</variation>
    <location>
        <position position="96"/>
    </location>
</feature>
<feature type="mutagenesis site" description="Does not affect interaction with the core iron-sulfur cluster assembly complex. Does not affect mitochondrial localization. Does not affect proteolytic processing." evidence="24">
    <original>D</original>
    <variation>G</variation>
    <location>
        <position position="104"/>
    </location>
</feature>
<feature type="mutagenesis site" description="Significantly reduces interaction with the core iron-sulfur cluster assembly complex. Does not affect mitochondrial localization. Does not affect proteolytic processing." evidence="24">
    <original>E</original>
    <variation>K</variation>
    <location>
        <position position="108"/>
    </location>
</feature>
<feature type="mutagenesis site" description="Significantly reduces interaction with the core iron-sulfur cluster assembly complex. Does not affect mitochondrial localization. Does not affect proteolytic processing." evidence="24">
    <original>E</original>
    <variation>K</variation>
    <location>
        <position position="111"/>
    </location>
</feature>
<feature type="mutagenesis site" description="Does not affect interaction with the core iron-sulfur cluster assembly complex. Does not affect mitochondrial localization. Does not affect proteolytic processing." evidence="24">
    <original>D</original>
    <variation>K</variation>
    <location>
        <position position="115"/>
    </location>
</feature>
<feature type="mutagenesis site" description="Drasticly reduces interaction with the core iron-sulfur cluster assembly complex. Does not affect mitochondrial localization. Does not affect proteolytic processing." evidence="24">
    <original>D</original>
    <variation>K</variation>
    <location>
        <position position="124"/>
    </location>
</feature>
<feature type="mutagenesis site" description="Does not affect interaction with the core iron-sulfur cluster assembly complex. Does not affect mitochondrial localization. Does not affect proteolytic processing." evidence="24">
    <original>N</original>
    <variation>A</variation>
    <location>
        <position position="146"/>
    </location>
</feature>
<feature type="mutagenesis site" description="Loss of interaction with the core iron-sulfur cluster assembly complex. Does not affect mitochondrial localization. Does not affect proteolytic processing." evidence="24">
    <original>W</original>
    <variation>G</variation>
    <location>
        <position position="173"/>
    </location>
</feature>
<feature type="sequence conflict" description="In Ref. 1; AAA98508/AAA98510." evidence="41" ref="1">
    <original>Y</original>
    <variation>F</variation>
    <location>
        <position position="175"/>
    </location>
</feature>
<feature type="sequence conflict" description="In Ref. 1; AAA98508/AAA98510." evidence="41" ref="1">
    <original>S</original>
    <variation>W</variation>
    <location>
        <position position="202"/>
    </location>
</feature>
<feature type="helix" evidence="47">
    <location>
        <begin position="92"/>
        <end position="114"/>
    </location>
</feature>
<feature type="strand" evidence="47">
    <location>
        <begin position="124"/>
        <end position="128"/>
    </location>
</feature>
<feature type="strand" evidence="47">
    <location>
        <begin position="131"/>
        <end position="135"/>
    </location>
</feature>
<feature type="strand" evidence="48">
    <location>
        <begin position="138"/>
        <end position="140"/>
    </location>
</feature>
<feature type="strand" evidence="47">
    <location>
        <begin position="142"/>
        <end position="148"/>
    </location>
</feature>
<feature type="turn" evidence="47">
    <location>
        <begin position="149"/>
        <end position="152"/>
    </location>
</feature>
<feature type="strand" evidence="47">
    <location>
        <begin position="153"/>
        <end position="157"/>
    </location>
</feature>
<feature type="strand" evidence="47">
    <location>
        <begin position="159"/>
        <end position="161"/>
    </location>
</feature>
<feature type="strand" evidence="47">
    <location>
        <begin position="164"/>
        <end position="168"/>
    </location>
</feature>
<feature type="strand" evidence="47">
    <location>
        <begin position="170"/>
        <end position="175"/>
    </location>
</feature>
<feature type="turn" evidence="47">
    <location>
        <begin position="176"/>
        <end position="178"/>
    </location>
</feature>
<feature type="helix" evidence="47">
    <location>
        <begin position="182"/>
        <end position="194"/>
    </location>
</feature>
<feature type="strand" evidence="48">
    <location>
        <begin position="203"/>
        <end position="205"/>
    </location>
</feature>
<feature type="strand" evidence="46">
    <location>
        <begin position="206"/>
        <end position="208"/>
    </location>
</feature>
<dbReference type="EC" id="1.16.3.1" evidence="14"/>
<dbReference type="EMBL" id="U43747">
    <property type="protein sequence ID" value="AAA98510.1"/>
    <property type="molecule type" value="mRNA"/>
</dbReference>
<dbReference type="EMBL" id="U43752">
    <property type="protein sequence ID" value="AAA98508.1"/>
    <property type="molecule type" value="Genomic_DNA"/>
</dbReference>
<dbReference type="EMBL" id="U43748">
    <property type="protein sequence ID" value="AAA98508.1"/>
    <property type="status" value="JOINED"/>
    <property type="molecule type" value="Genomic_DNA"/>
</dbReference>
<dbReference type="EMBL" id="U43749">
    <property type="protein sequence ID" value="AAA98508.1"/>
    <property type="status" value="JOINED"/>
    <property type="molecule type" value="Genomic_DNA"/>
</dbReference>
<dbReference type="EMBL" id="U43750">
    <property type="protein sequence ID" value="AAA98508.1"/>
    <property type="status" value="JOINED"/>
    <property type="molecule type" value="Genomic_DNA"/>
</dbReference>
<dbReference type="EMBL" id="U43751">
    <property type="protein sequence ID" value="AAA98508.1"/>
    <property type="status" value="JOINED"/>
    <property type="molecule type" value="Genomic_DNA"/>
</dbReference>
<dbReference type="EMBL" id="U43753">
    <property type="protein sequence ID" value="AAA98509.1"/>
    <property type="molecule type" value="Genomic_DNA"/>
</dbReference>
<dbReference type="EMBL" id="U43748">
    <property type="protein sequence ID" value="AAA98509.1"/>
    <property type="status" value="JOINED"/>
    <property type="molecule type" value="Genomic_DNA"/>
</dbReference>
<dbReference type="EMBL" id="U43749">
    <property type="protein sequence ID" value="AAA98509.1"/>
    <property type="status" value="JOINED"/>
    <property type="molecule type" value="Genomic_DNA"/>
</dbReference>
<dbReference type="EMBL" id="U43750">
    <property type="protein sequence ID" value="AAA98509.1"/>
    <property type="status" value="JOINED"/>
    <property type="molecule type" value="Genomic_DNA"/>
</dbReference>
<dbReference type="EMBL" id="U43751">
    <property type="protein sequence ID" value="AAA98509.1"/>
    <property type="status" value="JOINED"/>
    <property type="molecule type" value="Genomic_DNA"/>
</dbReference>
<dbReference type="EMBL" id="AL162730">
    <property type="status" value="NOT_ANNOTATED_CDS"/>
    <property type="molecule type" value="Genomic_DNA"/>
</dbReference>
<dbReference type="EMBL" id="BC023633">
    <property type="protein sequence ID" value="AAH23633.1"/>
    <property type="molecule type" value="mRNA"/>
</dbReference>
<dbReference type="EMBL" id="BC048097">
    <property type="protein sequence ID" value="AAH48097.1"/>
    <property type="molecule type" value="mRNA"/>
</dbReference>
<dbReference type="EMBL" id="Y13751">
    <property type="protein sequence ID" value="CAA74077.1"/>
    <property type="molecule type" value="Genomic_DNA"/>
</dbReference>
<dbReference type="EMBL" id="AF028240">
    <property type="protein sequence ID" value="AAB84047.1"/>
    <property type="molecule type" value="Genomic_DNA"/>
</dbReference>
<dbReference type="EMBL" id="U93173">
    <property type="protein sequence ID" value="AAD00734.1"/>
    <property type="molecule type" value="Genomic_DNA"/>
</dbReference>
<dbReference type="CCDS" id="CCDS43834.1">
    <molecule id="Q16595-3"/>
</dbReference>
<dbReference type="CCDS" id="CCDS6626.1">
    <molecule id="Q16595-1"/>
</dbReference>
<dbReference type="RefSeq" id="NP_000135.2">
    <molecule id="Q16595-1"/>
    <property type="nucleotide sequence ID" value="NM_000144.4"/>
</dbReference>
<dbReference type="RefSeq" id="NP_001155178.1">
    <property type="nucleotide sequence ID" value="NM_001161706.1"/>
</dbReference>
<dbReference type="RefSeq" id="NP_852090.1">
    <molecule id="Q16595-3"/>
    <property type="nucleotide sequence ID" value="NM_181425.3"/>
</dbReference>
<dbReference type="PDB" id="1EKG">
    <property type="method" value="X-ray"/>
    <property type="resolution" value="1.80 A"/>
    <property type="chains" value="A=86-210"/>
</dbReference>
<dbReference type="PDB" id="1LY7">
    <property type="method" value="NMR"/>
    <property type="chains" value="A=91-210"/>
</dbReference>
<dbReference type="PDB" id="3S4M">
    <property type="method" value="X-ray"/>
    <property type="resolution" value="1.30 A"/>
    <property type="chains" value="A=82-210"/>
</dbReference>
<dbReference type="PDB" id="3S5D">
    <property type="method" value="X-ray"/>
    <property type="resolution" value="1.50 A"/>
    <property type="chains" value="A=82-210"/>
</dbReference>
<dbReference type="PDB" id="3S5E">
    <property type="method" value="X-ray"/>
    <property type="resolution" value="1.31 A"/>
    <property type="chains" value="A=82-210"/>
</dbReference>
<dbReference type="PDB" id="3S5F">
    <property type="method" value="X-ray"/>
    <property type="resolution" value="1.50 A"/>
    <property type="chains" value="A/B=82-210"/>
</dbReference>
<dbReference type="PDB" id="3T3J">
    <property type="method" value="X-ray"/>
    <property type="resolution" value="1.70 A"/>
    <property type="chains" value="A=82-210"/>
</dbReference>
<dbReference type="PDB" id="3T3K">
    <property type="method" value="X-ray"/>
    <property type="resolution" value="1.24 A"/>
    <property type="chains" value="A=82-210"/>
</dbReference>
<dbReference type="PDB" id="3T3L">
    <property type="method" value="X-ray"/>
    <property type="resolution" value="1.15 A"/>
    <property type="chains" value="A=82-210"/>
</dbReference>
<dbReference type="PDB" id="3T3T">
    <property type="method" value="X-ray"/>
    <property type="resolution" value="1.38 A"/>
    <property type="chains" value="A/B/C/D=82-210"/>
</dbReference>
<dbReference type="PDB" id="3T3X">
    <property type="method" value="X-ray"/>
    <property type="resolution" value="1.57 A"/>
    <property type="chains" value="A/B=82-210"/>
</dbReference>
<dbReference type="PDB" id="5KZ5">
    <property type="method" value="EM"/>
    <property type="resolution" value="14.30 A"/>
    <property type="chains" value="A/B/C/D/E/F/G/H/I/J/K/L=42-210"/>
</dbReference>
<dbReference type="PDB" id="6NZU">
    <property type="method" value="EM"/>
    <property type="resolution" value="3.20 A"/>
    <property type="chains" value="I/J=81-210"/>
</dbReference>
<dbReference type="PDB" id="8PK8">
    <property type="method" value="EM"/>
    <property type="resolution" value="2.49 A"/>
    <property type="chains" value="E=81-210"/>
</dbReference>
<dbReference type="PDB" id="8PK9">
    <property type="method" value="EM"/>
    <property type="resolution" value="2.58 A"/>
    <property type="chains" value="E=81-210"/>
</dbReference>
<dbReference type="PDB" id="8RME">
    <property type="method" value="EM"/>
    <property type="resolution" value="2.49 A"/>
    <property type="chains" value="I=81-210"/>
</dbReference>
<dbReference type="PDBsum" id="1EKG"/>
<dbReference type="PDBsum" id="1LY7"/>
<dbReference type="PDBsum" id="3S4M"/>
<dbReference type="PDBsum" id="3S5D"/>
<dbReference type="PDBsum" id="3S5E"/>
<dbReference type="PDBsum" id="3S5F"/>
<dbReference type="PDBsum" id="3T3J"/>
<dbReference type="PDBsum" id="3T3K"/>
<dbReference type="PDBsum" id="3T3L"/>
<dbReference type="PDBsum" id="3T3T"/>
<dbReference type="PDBsum" id="3T3X"/>
<dbReference type="PDBsum" id="5KZ5"/>
<dbReference type="PDBsum" id="6NZU"/>
<dbReference type="PDBsum" id="8PK8"/>
<dbReference type="PDBsum" id="8PK9"/>
<dbReference type="PDBsum" id="8RME"/>
<dbReference type="BMRB" id="Q16595"/>
<dbReference type="EMDB" id="EMD-0560"/>
<dbReference type="EMDB" id="EMD-17732"/>
<dbReference type="EMDB" id="EMD-17733"/>
<dbReference type="EMDB" id="EMD-19359"/>
<dbReference type="EMDB" id="EMD-8301"/>
<dbReference type="SASBDB" id="Q16595"/>
<dbReference type="SMR" id="Q16595"/>
<dbReference type="BioGRID" id="108677">
    <property type="interactions" value="57"/>
</dbReference>
<dbReference type="ComplexPortal" id="CPX-5641">
    <property type="entry name" value="Mitochondrial NIAUFX iron-sulfur cluster assembly complex"/>
</dbReference>
<dbReference type="CORUM" id="Q16595"/>
<dbReference type="FunCoup" id="Q16595">
    <property type="interactions" value="974"/>
</dbReference>
<dbReference type="IntAct" id="Q16595">
    <property type="interactions" value="23"/>
</dbReference>
<dbReference type="MINT" id="Q16595"/>
<dbReference type="STRING" id="9606.ENSP00000419243"/>
<dbReference type="ChEMBL" id="CHEMBL2321640"/>
<dbReference type="DrugBank" id="DB14490">
    <property type="generic name" value="Ferrous ascorbate"/>
</dbReference>
<dbReference type="DrugBank" id="DB14491">
    <property type="generic name" value="Ferrous fumarate"/>
</dbReference>
<dbReference type="DrugBank" id="DB14488">
    <property type="generic name" value="Ferrous gluconate"/>
</dbReference>
<dbReference type="DrugBank" id="DB14501">
    <property type="generic name" value="Ferrous glycine sulfate"/>
</dbReference>
<dbReference type="DrugBank" id="DB14489">
    <property type="generic name" value="Ferrous succinate"/>
</dbReference>
<dbReference type="DrugBank" id="DB01592">
    <property type="generic name" value="Iron"/>
</dbReference>
<dbReference type="TCDB" id="9.B.21.1.1">
    <property type="family name" value="the frataxin (frataxin) family"/>
</dbReference>
<dbReference type="iPTMnet" id="Q16595"/>
<dbReference type="PhosphoSitePlus" id="Q16595"/>
<dbReference type="BioMuta" id="FXN"/>
<dbReference type="OGP" id="Q16595"/>
<dbReference type="jPOST" id="Q16595"/>
<dbReference type="MassIVE" id="Q16595"/>
<dbReference type="PaxDb" id="9606-ENSP00000366482"/>
<dbReference type="PeptideAtlas" id="Q16595"/>
<dbReference type="ProteomicsDB" id="2327"/>
<dbReference type="ProteomicsDB" id="60939">
    <molecule id="Q16595-1"/>
</dbReference>
<dbReference type="ProteomicsDB" id="60940">
    <molecule id="Q16595-2"/>
</dbReference>
<dbReference type="Pumba" id="Q16595"/>
<dbReference type="TopDownProteomics" id="Q16595-1">
    <molecule id="Q16595-1"/>
</dbReference>
<dbReference type="TopDownProteomics" id="Q16595-2">
    <molecule id="Q16595-2"/>
</dbReference>
<dbReference type="ABCD" id="Q16595">
    <property type="antibodies" value="1 sequenced antibody"/>
</dbReference>
<dbReference type="Antibodypedia" id="26793">
    <property type="antibodies" value="657 antibodies from 35 providers"/>
</dbReference>
<dbReference type="DNASU" id="2395"/>
<dbReference type="Ensembl" id="ENST00000396366.6">
    <molecule id="Q16595-3"/>
    <property type="protein sequence ID" value="ENSP00000379652.2"/>
    <property type="gene ID" value="ENSG00000165060.15"/>
</dbReference>
<dbReference type="Ensembl" id="ENST00000484259.3">
    <molecule id="Q16595-1"/>
    <property type="protein sequence ID" value="ENSP00000419243.2"/>
    <property type="gene ID" value="ENSG00000165060.15"/>
</dbReference>
<dbReference type="GeneID" id="2395"/>
<dbReference type="KEGG" id="hsa:2395"/>
<dbReference type="MANE-Select" id="ENST00000484259.3">
    <property type="protein sequence ID" value="ENSP00000419243.2"/>
    <property type="RefSeq nucleotide sequence ID" value="NM_000144.5"/>
    <property type="RefSeq protein sequence ID" value="NP_000135.2"/>
</dbReference>
<dbReference type="UCSC" id="uc004agz.3">
    <molecule id="Q16595-1"/>
    <property type="organism name" value="human"/>
</dbReference>
<dbReference type="AGR" id="HGNC:3951"/>
<dbReference type="CTD" id="2395"/>
<dbReference type="DisGeNET" id="2395"/>
<dbReference type="GeneCards" id="FXN"/>
<dbReference type="GeneReviews" id="FXN"/>
<dbReference type="HGNC" id="HGNC:3951">
    <property type="gene designation" value="FXN"/>
</dbReference>
<dbReference type="HPA" id="ENSG00000165060">
    <property type="expression patterns" value="Low tissue specificity"/>
</dbReference>
<dbReference type="MalaCards" id="FXN"/>
<dbReference type="MIM" id="229300">
    <property type="type" value="phenotype"/>
</dbReference>
<dbReference type="MIM" id="606829">
    <property type="type" value="gene"/>
</dbReference>
<dbReference type="neXtProt" id="NX_Q16595"/>
<dbReference type="OpenTargets" id="ENSG00000165060"/>
<dbReference type="Orphanet" id="95">
    <property type="disease" value="Friedreich ataxia"/>
</dbReference>
<dbReference type="PharmGKB" id="PA28369"/>
<dbReference type="VEuPathDB" id="HostDB:ENSG00000165060"/>
<dbReference type="eggNOG" id="KOG3413">
    <property type="taxonomic scope" value="Eukaryota"/>
</dbReference>
<dbReference type="GeneTree" id="ENSGT00390000005811"/>
<dbReference type="HOGENOM" id="CLU_080880_1_0_1"/>
<dbReference type="InParanoid" id="Q16595"/>
<dbReference type="OMA" id="QSVHLMN"/>
<dbReference type="OrthoDB" id="1897642at2759"/>
<dbReference type="PAN-GO" id="Q16595">
    <property type="GO annotations" value="8 GO annotations based on evolutionary models"/>
</dbReference>
<dbReference type="PhylomeDB" id="Q16595"/>
<dbReference type="TreeFam" id="TF318958"/>
<dbReference type="PathwayCommons" id="Q16595"/>
<dbReference type="Reactome" id="R-HSA-1268020">
    <property type="pathway name" value="Mitochondrial protein import"/>
</dbReference>
<dbReference type="Reactome" id="R-HSA-1362409">
    <property type="pathway name" value="Mitochondrial iron-sulfur cluster biogenesis"/>
</dbReference>
<dbReference type="Reactome" id="R-HSA-9854311">
    <property type="pathway name" value="Maturation of TCA enzymes and regulation of TCA cycle"/>
</dbReference>
<dbReference type="Reactome" id="R-HSA-9865881">
    <property type="pathway name" value="Complex III assembly"/>
</dbReference>
<dbReference type="SABIO-RK" id="Q16595"/>
<dbReference type="SignaLink" id="Q16595"/>
<dbReference type="SIGNOR" id="Q16595"/>
<dbReference type="BioGRID-ORCS" id="2395">
    <property type="hits" value="504 hits in 1139 CRISPR screens"/>
</dbReference>
<dbReference type="ChiTaRS" id="FXN">
    <property type="organism name" value="human"/>
</dbReference>
<dbReference type="EvolutionaryTrace" id="Q16595"/>
<dbReference type="GeneWiki" id="Frataxin"/>
<dbReference type="GenomeRNAi" id="2395"/>
<dbReference type="Pharos" id="Q16595">
    <property type="development level" value="Tbio"/>
</dbReference>
<dbReference type="PRO" id="PR:Q16595"/>
<dbReference type="Proteomes" id="UP000005640">
    <property type="component" value="Chromosome 9"/>
</dbReference>
<dbReference type="RNAct" id="Q16595">
    <property type="molecule type" value="protein"/>
</dbReference>
<dbReference type="Bgee" id="ENSG00000165060">
    <property type="expression patterns" value="Expressed in right lobe of liver and 181 other cell types or tissues"/>
</dbReference>
<dbReference type="ExpressionAtlas" id="Q16595">
    <property type="expression patterns" value="baseline and differential"/>
</dbReference>
<dbReference type="GO" id="GO:0005829">
    <property type="term" value="C:cytosol"/>
    <property type="evidence" value="ECO:0000314"/>
    <property type="project" value="BHF-UCL"/>
</dbReference>
<dbReference type="GO" id="GO:1990229">
    <property type="term" value="C:iron-sulfur cluster assembly complex"/>
    <property type="evidence" value="ECO:0000303"/>
    <property type="project" value="ComplexPortal"/>
</dbReference>
<dbReference type="GO" id="GO:0099128">
    <property type="term" value="C:mitochondrial [2Fe-2S] assembly complex"/>
    <property type="evidence" value="ECO:0000314"/>
    <property type="project" value="UniProtKB"/>
</dbReference>
<dbReference type="GO" id="GO:0005759">
    <property type="term" value="C:mitochondrial matrix"/>
    <property type="evidence" value="ECO:0000250"/>
    <property type="project" value="BHF-UCL"/>
</dbReference>
<dbReference type="GO" id="GO:0005739">
    <property type="term" value="C:mitochondrion"/>
    <property type="evidence" value="ECO:0000314"/>
    <property type="project" value="UniProtKB"/>
</dbReference>
<dbReference type="GO" id="GO:0051537">
    <property type="term" value="F:2 iron, 2 sulfur cluster binding"/>
    <property type="evidence" value="ECO:0000314"/>
    <property type="project" value="BHF-UCL"/>
</dbReference>
<dbReference type="GO" id="GO:0008047">
    <property type="term" value="F:enzyme activator activity"/>
    <property type="evidence" value="ECO:0000314"/>
    <property type="project" value="BHF-UCL"/>
</dbReference>
<dbReference type="GO" id="GO:0008199">
    <property type="term" value="F:ferric iron binding"/>
    <property type="evidence" value="ECO:0000314"/>
    <property type="project" value="BHF-UCL"/>
</dbReference>
<dbReference type="GO" id="GO:0008198">
    <property type="term" value="F:ferrous iron binding"/>
    <property type="evidence" value="ECO:0000314"/>
    <property type="project" value="UniProtKB"/>
</dbReference>
<dbReference type="GO" id="GO:0004322">
    <property type="term" value="F:ferroxidase activity"/>
    <property type="evidence" value="ECO:0000314"/>
    <property type="project" value="UniProtKB"/>
</dbReference>
<dbReference type="GO" id="GO:0034986">
    <property type="term" value="F:iron chaperone activity"/>
    <property type="evidence" value="ECO:0000314"/>
    <property type="project" value="BHF-UCL"/>
</dbReference>
<dbReference type="GO" id="GO:0044571">
    <property type="term" value="P:[2Fe-2S] cluster assembly"/>
    <property type="evidence" value="ECO:0000314"/>
    <property type="project" value="UniProtKB"/>
</dbReference>
<dbReference type="GO" id="GO:0044572">
    <property type="term" value="P:[4Fe-4S] cluster assembly"/>
    <property type="evidence" value="ECO:0000314"/>
    <property type="project" value="UniProtKB"/>
</dbReference>
<dbReference type="GO" id="GO:0007628">
    <property type="term" value="P:adult walking behavior"/>
    <property type="evidence" value="ECO:0007669"/>
    <property type="project" value="Ensembl"/>
</dbReference>
<dbReference type="GO" id="GO:0070301">
    <property type="term" value="P:cellular response to hydrogen peroxide"/>
    <property type="evidence" value="ECO:0000314"/>
    <property type="project" value="UniProtKB"/>
</dbReference>
<dbReference type="GO" id="GO:0009792">
    <property type="term" value="P:embryo development ending in birth or egg hatching"/>
    <property type="evidence" value="ECO:0007669"/>
    <property type="project" value="Ensembl"/>
</dbReference>
<dbReference type="GO" id="GO:0006783">
    <property type="term" value="P:heme biosynthetic process"/>
    <property type="evidence" value="ECO:0000314"/>
    <property type="project" value="BHF-UCL"/>
</dbReference>
<dbReference type="GO" id="GO:0006879">
    <property type="term" value="P:intracellular iron ion homeostasis"/>
    <property type="evidence" value="ECO:0000315"/>
    <property type="project" value="BHF-UCL"/>
</dbReference>
<dbReference type="GO" id="GO:0006826">
    <property type="term" value="P:iron ion transport"/>
    <property type="evidence" value="ECO:0007669"/>
    <property type="project" value="UniProtKB-KW"/>
</dbReference>
<dbReference type="GO" id="GO:0016226">
    <property type="term" value="P:iron-sulfur cluster assembly"/>
    <property type="evidence" value="ECO:0000314"/>
    <property type="project" value="BHF-UCL"/>
</dbReference>
<dbReference type="GO" id="GO:0034551">
    <property type="term" value="P:mitochondrial respiratory chain complex III assembly"/>
    <property type="evidence" value="ECO:0000304"/>
    <property type="project" value="Reactome"/>
</dbReference>
<dbReference type="GO" id="GO:0046716">
    <property type="term" value="P:muscle cell cellular homeostasis"/>
    <property type="evidence" value="ECO:0007669"/>
    <property type="project" value="Ensembl"/>
</dbReference>
<dbReference type="GO" id="GO:0043066">
    <property type="term" value="P:negative regulation of apoptotic process"/>
    <property type="evidence" value="ECO:0000315"/>
    <property type="project" value="UniProtKB"/>
</dbReference>
<dbReference type="GO" id="GO:0040015">
    <property type="term" value="P:negative regulation of multicellular organism growth"/>
    <property type="evidence" value="ECO:0007669"/>
    <property type="project" value="Ensembl"/>
</dbReference>
<dbReference type="GO" id="GO:0046621">
    <property type="term" value="P:negative regulation of organ growth"/>
    <property type="evidence" value="ECO:0007669"/>
    <property type="project" value="Ensembl"/>
</dbReference>
<dbReference type="GO" id="GO:0090201">
    <property type="term" value="P:negative regulation of release of cytochrome c from mitochondria"/>
    <property type="evidence" value="ECO:0000315"/>
    <property type="project" value="UniProtKB"/>
</dbReference>
<dbReference type="GO" id="GO:0035265">
    <property type="term" value="P:organ growth"/>
    <property type="evidence" value="ECO:0007669"/>
    <property type="project" value="Ensembl"/>
</dbReference>
<dbReference type="GO" id="GO:0006119">
    <property type="term" value="P:oxidative phosphorylation"/>
    <property type="evidence" value="ECO:0007669"/>
    <property type="project" value="Ensembl"/>
</dbReference>
<dbReference type="GO" id="GO:0051349">
    <property type="term" value="P:positive regulation of lyase activity"/>
    <property type="evidence" value="ECO:0000314"/>
    <property type="project" value="UniProtKB"/>
</dbReference>
<dbReference type="GO" id="GO:0019230">
    <property type="term" value="P:proprioception"/>
    <property type="evidence" value="ECO:0007669"/>
    <property type="project" value="Ensembl"/>
</dbReference>
<dbReference type="GO" id="GO:0016540">
    <property type="term" value="P:protein autoprocessing"/>
    <property type="evidence" value="ECO:0000314"/>
    <property type="project" value="BHF-UCL"/>
</dbReference>
<dbReference type="GO" id="GO:0051604">
    <property type="term" value="P:protein maturation"/>
    <property type="evidence" value="ECO:0000315"/>
    <property type="project" value="BHF-UCL"/>
</dbReference>
<dbReference type="GO" id="GO:0010039">
    <property type="term" value="P:response to iron ion"/>
    <property type="evidence" value="ECO:0000315"/>
    <property type="project" value="BHF-UCL"/>
</dbReference>
<dbReference type="CDD" id="cd00503">
    <property type="entry name" value="Frataxin"/>
    <property type="match status" value="1"/>
</dbReference>
<dbReference type="DisProt" id="DP00607"/>
<dbReference type="FunFam" id="3.30.920.10:FF:000002">
    <property type="entry name" value="Frataxin, mitochondrial"/>
    <property type="match status" value="1"/>
</dbReference>
<dbReference type="Gene3D" id="3.30.920.10">
    <property type="entry name" value="Frataxin/CyaY"/>
    <property type="match status" value="1"/>
</dbReference>
<dbReference type="InterPro" id="IPR017789">
    <property type="entry name" value="Frataxin"/>
</dbReference>
<dbReference type="InterPro" id="IPR002908">
    <property type="entry name" value="Frataxin/CyaY"/>
</dbReference>
<dbReference type="InterPro" id="IPR036524">
    <property type="entry name" value="Frataxin/CyaY_sf"/>
</dbReference>
<dbReference type="InterPro" id="IPR020895">
    <property type="entry name" value="Frataxin_CS"/>
</dbReference>
<dbReference type="NCBIfam" id="TIGR03421">
    <property type="entry name" value="FeS_CyaY"/>
    <property type="match status" value="1"/>
</dbReference>
<dbReference type="NCBIfam" id="TIGR03422">
    <property type="entry name" value="mito_frataxin"/>
    <property type="match status" value="1"/>
</dbReference>
<dbReference type="PANTHER" id="PTHR16821">
    <property type="entry name" value="FRATAXIN"/>
    <property type="match status" value="1"/>
</dbReference>
<dbReference type="PANTHER" id="PTHR16821:SF4">
    <property type="entry name" value="FRATAXIN, MITOCHONDRIAL"/>
    <property type="match status" value="1"/>
</dbReference>
<dbReference type="Pfam" id="PF01491">
    <property type="entry name" value="Frataxin_Cyay"/>
    <property type="match status" value="1"/>
</dbReference>
<dbReference type="PRINTS" id="PR00904">
    <property type="entry name" value="FRATAXIN"/>
</dbReference>
<dbReference type="SMART" id="SM01219">
    <property type="entry name" value="Frataxin_Cyay"/>
    <property type="match status" value="1"/>
</dbReference>
<dbReference type="SUPFAM" id="SSF55387">
    <property type="entry name" value="Frataxin/Nqo15-like"/>
    <property type="match status" value="1"/>
</dbReference>
<dbReference type="PROSITE" id="PS01344">
    <property type="entry name" value="FRATAXIN_1"/>
    <property type="match status" value="1"/>
</dbReference>
<dbReference type="PROSITE" id="PS50810">
    <property type="entry name" value="FRATAXIN_2"/>
    <property type="match status" value="1"/>
</dbReference>
<organism>
    <name type="scientific">Homo sapiens</name>
    <name type="common">Human</name>
    <dbReference type="NCBI Taxonomy" id="9606"/>
    <lineage>
        <taxon>Eukaryota</taxon>
        <taxon>Metazoa</taxon>
        <taxon>Chordata</taxon>
        <taxon>Craniata</taxon>
        <taxon>Vertebrata</taxon>
        <taxon>Euteleostomi</taxon>
        <taxon>Mammalia</taxon>
        <taxon>Eutheria</taxon>
        <taxon>Euarchontoglires</taxon>
        <taxon>Primates</taxon>
        <taxon>Haplorrhini</taxon>
        <taxon>Catarrhini</taxon>
        <taxon>Hominidae</taxon>
        <taxon>Homo</taxon>
    </lineage>
</organism>
<keyword id="KW-0002">3D-structure</keyword>
<keyword id="KW-0025">Alternative splicing</keyword>
<keyword id="KW-0963">Cytoplasm</keyword>
<keyword id="KW-0903">Direct protein sequencing</keyword>
<keyword id="KW-0225">Disease variant</keyword>
<keyword id="KW-0350">Heme biosynthesis</keyword>
<keyword id="KW-0406">Ion transport</keyword>
<keyword id="KW-0408">Iron</keyword>
<keyword id="KW-0409">Iron storage</keyword>
<keyword id="KW-0410">Iron transport</keyword>
<keyword id="KW-0479">Metal-binding</keyword>
<keyword id="KW-0496">Mitochondrion</keyword>
<keyword id="KW-0560">Oxidoreductase</keyword>
<keyword id="KW-1267">Proteomics identification</keyword>
<keyword id="KW-1185">Reference proteome</keyword>
<keyword id="KW-0809">Transit peptide</keyword>
<keyword id="KW-0813">Transport</keyword>
<keyword id="KW-0818">Triplet repeat expansion</keyword>
<proteinExistence type="evidence at protein level"/>
<sequence>MWTLGRRAVAGLLASPSPAQAQTLTRVPRPAELAPLCGRRGLRTDIDATCTPRRASSNQRGLNQIWNVKKQSVYLMNLRKSGTLGHPGSLDETTYERLAEETLDSLAEFFEDLADKPYTFEDYDVSFGSGVLTVKLGGDLGTYVINKQTPNKQIWLSSPSSGPKRYDWTGKNWVYSHDGVSLHELLAAELTKALKTKLDLSSLAYSGKDA</sequence>
<evidence type="ECO:0000250" key="1">
    <source>
        <dbReference type="UniProtKB" id="D3ZYW7"/>
    </source>
</evidence>
<evidence type="ECO:0000250" key="2">
    <source>
        <dbReference type="UniProtKB" id="Q9H1K1"/>
    </source>
</evidence>
<evidence type="ECO:0000269" key="3">
    <source>
    </source>
</evidence>
<evidence type="ECO:0000269" key="4">
    <source>
    </source>
</evidence>
<evidence type="ECO:0000269" key="5">
    <source>
    </source>
</evidence>
<evidence type="ECO:0000269" key="6">
    <source>
    </source>
</evidence>
<evidence type="ECO:0000269" key="7">
    <source>
    </source>
</evidence>
<evidence type="ECO:0000269" key="8">
    <source>
    </source>
</evidence>
<evidence type="ECO:0000269" key="9">
    <source>
    </source>
</evidence>
<evidence type="ECO:0000269" key="10">
    <source>
    </source>
</evidence>
<evidence type="ECO:0000269" key="11">
    <source>
    </source>
</evidence>
<evidence type="ECO:0000269" key="12">
    <source>
    </source>
</evidence>
<evidence type="ECO:0000269" key="13">
    <source>
    </source>
</evidence>
<evidence type="ECO:0000269" key="14">
    <source>
    </source>
</evidence>
<evidence type="ECO:0000269" key="15">
    <source>
    </source>
</evidence>
<evidence type="ECO:0000269" key="16">
    <source>
    </source>
</evidence>
<evidence type="ECO:0000269" key="17">
    <source>
    </source>
</evidence>
<evidence type="ECO:0000269" key="18">
    <source>
    </source>
</evidence>
<evidence type="ECO:0000269" key="19">
    <source>
    </source>
</evidence>
<evidence type="ECO:0000269" key="20">
    <source>
    </source>
</evidence>
<evidence type="ECO:0000269" key="21">
    <source>
    </source>
</evidence>
<evidence type="ECO:0000269" key="22">
    <source>
    </source>
</evidence>
<evidence type="ECO:0000269" key="23">
    <source>
    </source>
</evidence>
<evidence type="ECO:0000269" key="24">
    <source>
    </source>
</evidence>
<evidence type="ECO:0000269" key="25">
    <source>
    </source>
</evidence>
<evidence type="ECO:0000269" key="26">
    <source>
    </source>
</evidence>
<evidence type="ECO:0000269" key="27">
    <source>
    </source>
</evidence>
<evidence type="ECO:0000269" key="28">
    <source>
    </source>
</evidence>
<evidence type="ECO:0000269" key="29">
    <source>
    </source>
</evidence>
<evidence type="ECO:0000269" key="30">
    <source>
    </source>
</evidence>
<evidence type="ECO:0000269" key="31">
    <source>
    </source>
</evidence>
<evidence type="ECO:0000269" key="32">
    <source>
    </source>
</evidence>
<evidence type="ECO:0000269" key="33">
    <source>
    </source>
</evidence>
<evidence type="ECO:0000269" key="34">
    <source>
    </source>
</evidence>
<evidence type="ECO:0000269" key="35">
    <source ref="40"/>
</evidence>
<evidence type="ECO:0000269" key="36">
    <source ref="7"/>
</evidence>
<evidence type="ECO:0000269" key="37">
    <source ref="8"/>
</evidence>
<evidence type="ECO:0000303" key="38">
    <source>
    </source>
</evidence>
<evidence type="ECO:0000303" key="39">
    <source>
    </source>
</evidence>
<evidence type="ECO:0000303" key="40">
    <source>
    </source>
</evidence>
<evidence type="ECO:0000305" key="41"/>
<evidence type="ECO:0000305" key="42">
    <source>
    </source>
</evidence>
<evidence type="ECO:0000305" key="43">
    <source>
    </source>
</evidence>
<evidence type="ECO:0000312" key="44">
    <source>
        <dbReference type="HGNC" id="HGNC:3951"/>
    </source>
</evidence>
<evidence type="ECO:0007744" key="45">
    <source>
        <dbReference type="PDB" id="6NZU"/>
    </source>
</evidence>
<evidence type="ECO:0007829" key="46">
    <source>
        <dbReference type="PDB" id="1LY7"/>
    </source>
</evidence>
<evidence type="ECO:0007829" key="47">
    <source>
        <dbReference type="PDB" id="3T3L"/>
    </source>
</evidence>
<evidence type="ECO:0007829" key="48">
    <source>
        <dbReference type="PDB" id="6NZU"/>
    </source>
</evidence>
<gene>
    <name evidence="44" type="primary">FXN</name>
    <name type="synonym">FRDA</name>
    <name type="synonym">X25</name>
</gene>
<name>FRDA_HUMAN</name>
<comment type="function">
    <molecule>Frataxin mature form</molecule>
    <text evidence="2 8 9 10 11 12 14 17 25 27">Functions as an activator of persulfide transfer to the scaffoding protein ISCU as component of the core iron-sulfur cluster (ISC) assembly complex and participates to the [2Fe-2S] cluster assembly (PubMed:12785837, PubMed:24971490). Accelerates sulfur transfer from NFS1 persulfide intermediate to ISCU and to small thiols such as L-cysteine and glutathione leading to persulfuration of these thiols and ultimately sulfide release (PubMed:24971490). Binds ferrous ion and is released from FXN upon the addition of both L-cysteine and reduced FDX2 during [2Fe-2S] cluster assembly (PubMed:29576242). The core iron-sulfur cluster (ISC) assembly complex is involved in the de novo synthesis of a [2Fe-2S] cluster, the first step of the mitochondrial iron-sulfur protein biogenesis. This process is initiated by the cysteine desulfurase complex (NFS1:LYRM4:NDUFAB1) that produces persulfide which is delivered on the scaffold protein ISCU in a FXN-dependent manner. Then this complex is stabilized by FDX2 which provides reducing equivalents to accomplish the [2Fe-2S] cluster assembly. Finally, the [2Fe-2S] cluster is transferred from ISCU to chaperone proteins, including HSCB, HSPA9 and GLRX5 (By similarity). May play a role in the protection against iron-catalyzed oxidative stress through its ability to catalyze the oxidation of Fe(2+) to Fe(3+); the oligomeric form but not the monomeric form has in vitro ferroxidase activity (PubMed:15641778). May be able to store large amounts of iron in the form of a ferrihydrite mineral by oligomerization; however, the physiological relevance is unsure as reports are conflicting and the function has only been shown using heterologous overexpression systems (PubMed:11823441, PubMed:12755598). May function as an iron chaperone protein that protects the aconitase [4Fe-4S]2+ cluster from disassembly and promotes enzyme reactivation (PubMed:15247478). May play a role as a high affinity iron binding partner for FECH that is capable of both delivering iron to ferrochelatase and mediating the terminal step in mitochondrial heme biosynthesis (PubMed:15123683, PubMed:16239244).</text>
</comment>
<comment type="function">
    <molecule>Extramitochondrial frataxin</molecule>
    <text evidence="16 18 23">Modulates the RNA-binding activity of ACO1 (PubMed:20053667). May be involved in the cytoplasmic iron-sulfur protein biogenesis (PubMed:16091420). May contribute to oxidative stress resistance and overall cell survival (PubMed:16608849).</text>
</comment>
<comment type="catalytic activity">
    <molecule>Frataxin mature form</molecule>
    <reaction evidence="14">
        <text>4 Fe(2+) + O2 + 4 H(+) = 4 Fe(3+) + 2 H2O</text>
        <dbReference type="Rhea" id="RHEA:11148"/>
        <dbReference type="ChEBI" id="CHEBI:15377"/>
        <dbReference type="ChEBI" id="CHEBI:15378"/>
        <dbReference type="ChEBI" id="CHEBI:15379"/>
        <dbReference type="ChEBI" id="CHEBI:29033"/>
        <dbReference type="ChEBI" id="CHEBI:29034"/>
        <dbReference type="EC" id="1.16.3.1"/>
    </reaction>
</comment>
<comment type="subunit">
    <molecule>Frataxin mature form</molecule>
    <text evidence="1 8 9 10 11 13 14 15 19 26 27 28 42 43">Component of the mitochondrial core iron-sulfur cluster (ISC) complex composed of NFS1, LYRM4, NDUFAB1, ISCU, FXN, and FDX2; this complex is a heterohexamer containing two copies of each monomer (Probable). Homodimer (PubMed:31101807). Monomer (probable predominant form). Oligomer. Monomers and polymeric aggregates of &gt;1 MDa have been isolated from mitochondria. A small fraction of heterologous overexpressed recombinant frataxin forms high-molecular weight aggregates that incorporate iron (PubMed:11823441, PubMed:12755598, PubMed:15581888, PubMed:15641778). Interacts with LYRM4 (PubMed:17331979). Interacts (via ferrous form) with ISCU; the interaction is possible when both are bound to the dimeric form of the cysteine desulfurase complex (NFS1:LYRM4) and the interaction enhances FXN interaction to the dimeric form of the cysteine desulfurase complex (NFS1:LYRM4) (PubMed:12785837, PubMed:29576242, PubMed:31101807). Interacts with FECH; one iron-bound FXN monomer seems to interact with a FECH homodimer (PubMed:15123683). Interacts with SDHA and SDHB (PubMed:15961414). Interacts with ACO2; the interaction is dependent on citrate (By similarity). Interacts with HSPA9 (PubMed:17331979, PubMed:26702583).</text>
</comment>
<comment type="subunit">
    <molecule>Extramitochondrial frataxin</molecule>
    <text evidence="16 23">Interacts with ACO1 (PubMed:20053667). Interacts with ISCU (cytoplasmic form) (PubMed:16091420).</text>
</comment>
<comment type="interaction">
    <interactant intactId="EBI-949340">
        <id>Q16595</id>
    </interactant>
    <interactant intactId="EBI-25857117">
        <id>Q9BVU5</id>
        <label>ARL17</label>
    </interactant>
    <organismsDiffer>false</organismsDiffer>
    <experiments>3</experiments>
</comment>
<comment type="interaction">
    <interactant intactId="EBI-949340">
        <id>Q16595</id>
    </interactant>
    <interactant intactId="EBI-3915761">
        <id>Q9HC96</id>
        <label>CAPN10</label>
    </interactant>
    <organismsDiffer>false</organismsDiffer>
    <experiments>3</experiments>
</comment>
<comment type="interaction">
    <interactant intactId="EBI-949340">
        <id>Q16595</id>
    </interactant>
    <interactant intactId="EBI-2835660">
        <id>Q92828</id>
        <label>CORO2A</label>
    </interactant>
    <organismsDiffer>false</organismsDiffer>
    <experiments>3</experiments>
</comment>
<comment type="interaction">
    <interactant intactId="EBI-949340">
        <id>Q16595</id>
    </interactant>
    <interactant intactId="EBI-3918199">
        <id>Q9UN19</id>
        <label>DAPP1</label>
    </interactant>
    <organismsDiffer>false</organismsDiffer>
    <experiments>6</experiments>
</comment>
<comment type="interaction">
    <interactant intactId="EBI-949340">
        <id>Q16595</id>
    </interactant>
    <interactant intactId="EBI-5916454">
        <id>A6NEM1</id>
        <label>GOLGA6L9</label>
    </interactant>
    <organismsDiffer>false</organismsDiffer>
    <experiments>3</experiments>
</comment>
<comment type="interaction">
    <interactant intactId="EBI-949340">
        <id>Q16595</id>
    </interactant>
    <interactant intactId="EBI-629434">
        <id>O75925</id>
        <label>PIAS1</label>
    </interactant>
    <organismsDiffer>false</organismsDiffer>
    <experiments>3</experiments>
</comment>
<comment type="interaction">
    <interactant intactId="EBI-949340">
        <id>Q16595</id>
    </interactant>
    <interactant intactId="EBI-438710">
        <id>Q9NS23-4</id>
        <label>RASSF1</label>
    </interactant>
    <organismsDiffer>false</organismsDiffer>
    <experiments>3</experiments>
</comment>
<comment type="interaction">
    <interactant intactId="EBI-949340">
        <id>Q16595</id>
    </interactant>
    <interactant intactId="EBI-749039">
        <id>Q8WVD3</id>
        <label>RNF138</label>
    </interactant>
    <organismsDiffer>false</organismsDiffer>
    <experiments>3</experiments>
</comment>
<comment type="interaction">
    <interactant intactId="EBI-949340">
        <id>Q16595</id>
    </interactant>
    <interactant intactId="EBI-743938">
        <id>Q96D59</id>
        <label>RNF183</label>
    </interactant>
    <organismsDiffer>false</organismsDiffer>
    <experiments>3</experiments>
</comment>
<comment type="interaction">
    <interactant intactId="EBI-949340">
        <id>Q16595</id>
    </interactant>
    <interactant intactId="EBI-11528848">
        <id>Q8N6K7-2</id>
        <label>SAMD3</label>
    </interactant>
    <organismsDiffer>false</organismsDiffer>
    <experiments>3</experiments>
</comment>
<comment type="interaction">
    <interactant intactId="EBI-949340">
        <id>Q16595</id>
    </interactant>
    <interactant intactId="EBI-358545">
        <id>Q9GZS3</id>
        <label>SKIC8</label>
    </interactant>
    <organismsDiffer>false</organismsDiffer>
    <experiments>3</experiments>
</comment>
<comment type="subcellular location">
    <molecule>Frataxin mature form</molecule>
    <subcellularLocation>
        <location evidence="13 16 18 21 23 24 31 32">Mitochondrion</location>
    </subcellularLocation>
</comment>
<comment type="subcellular location">
    <molecule>Extramitochondrial frataxin</molecule>
    <subcellularLocation>
        <location evidence="16 18 23">Cytoplasm</location>
        <location evidence="16 18 23">Cytosol</location>
    </subcellularLocation>
</comment>
<comment type="alternative products">
    <event type="alternative splicing"/>
    <isoform>
        <id>Q16595-1</id>
        <name>1</name>
        <sequence type="displayed"/>
    </isoform>
    <isoform>
        <id>Q16595-2</id>
        <name>2</name>
        <sequence type="described" ref="VSP_001576"/>
    </isoform>
    <isoform>
        <id>Q16595-3</id>
        <name>3</name>
        <sequence type="described" ref="VSP_047282"/>
    </isoform>
</comment>
<comment type="tissue specificity">
    <text evidence="20">Expressed in the heart, peripheral blood lymphocytes and dermal fibroblasts.</text>
</comment>
<comment type="PTM">
    <text evidence="3 4 7 20 21 24">Processed in two steps by mitochondrial processing peptidase (MPP). MPP first cleaves the precursor to intermediate form and subsequently converts the intermediate to yield frataxin mature form (frataxin(81-210)) which is the predominant form (PubMed:21298097). The additional forms, frataxin(56-210) and frataxin(78-210), seem to be produced when the normal maturation process is impaired; their physiological relevance is unsure.</text>
</comment>
<comment type="disease" evidence="5 6 22 24 25 28 30 33 34 35 36 37">
    <disease id="DI-01630">
        <name>Friedreich ataxia</name>
        <acronym>FRDA</acronym>
        <description>Autosomal recessive, progressive degenerative disease characterized by neurodegeneration and cardiomyopathy it is the most common inherited ataxia. The disorder is usually manifest before adolescence and is generally characterized by incoordination of limb movements, dysarthria, nystagmus, diminished or absent tendon reflexes, Babinski sign, impairment of position and vibratory senses, scoliosis, pes cavus, and hammer toe. In most patients, FRDA is due to GAA triplet repeat expansions in the first intron of the frataxin gene. But in some cases the disease is due to mutations in the coding region.</description>
        <dbReference type="MIM" id="229300"/>
    </disease>
    <text>The disease is caused by variants affecting the gene represented in this entry.</text>
</comment>
<comment type="miscellaneous">
    <text>The unusual migration profile of mature frataxin on SDS-PAGE due to its acidic N-terminus most likely contributed to conflicting reports for the N-terminus of the mature protein. Unlike prokaryotic and yeast frataxin homologs, which self-assemble at high iron concentrations, oligomerization of human frataxin is not induced by iron. The existence of a specialized mitochondrial ferritin in mammalia (FTMT) is suggesting that iron storage would be redundant function, at least in mammalian mitochondria.</text>
</comment>
<comment type="miscellaneous">
    <molecule>Isoform 2</molecule>
    <text evidence="41">Not highly expressed and may be artifactual.</text>
</comment>
<comment type="similarity">
    <text evidence="41">Belongs to the frataxin family.</text>
</comment>
<protein>
    <recommendedName>
        <fullName evidence="38">Frataxin, mitochondrial</fullName>
        <ecNumber evidence="14">1.16.3.1</ecNumber>
    </recommendedName>
    <alternativeName>
        <fullName>Friedreich ataxia protein</fullName>
        <shortName>Fxn</shortName>
    </alternativeName>
    <component>
        <recommendedName>
            <fullName>Frataxin intermediate form</fullName>
            <shortName>i-FXN</shortName>
        </recommendedName>
    </component>
    <component>
        <recommendedName>
            <fullName>Frataxin(56-210)</fullName>
        </recommendedName>
        <alternativeName>
            <fullName>m56-FXN</fullName>
        </alternativeName>
    </component>
    <component>
        <recommendedName>
            <fullName>Frataxin(78-210)</fullName>
        </recommendedName>
        <alternativeName>
            <fullName>d-FXN</fullName>
        </alternativeName>
        <alternativeName>
            <fullName>m78-FXN</fullName>
        </alternativeName>
    </component>
    <component>
        <recommendedName>
            <fullName>Frataxin mature form</fullName>
        </recommendedName>
        <alternativeName>
            <fullName>Frataxin(81-210)</fullName>
        </alternativeName>
        <alternativeName>
            <fullName>m81-FXN</fullName>
        </alternativeName>
    </component>
    <component>
        <recommendedName>
            <fullName evidence="39">Extramitochondrial frataxin</fullName>
        </recommendedName>
    </component>
</protein>
<accession>Q16595</accession>
<accession>A8MXJ6</accession>
<accession>C9JJ89</accession>
<accession>O15545</accession>
<accession>O95656</accession>
<accession>Q15294</accession>
<accession>Q5VZ01</accession>
<reference key="1">
    <citation type="journal article" date="1996" name="Science">
        <title>Friedreich's ataxia: autosomal recessive disease caused by an intronic GAA triplet repeat expansion.</title>
        <authorList>
            <person name="Campuzano V."/>
            <person name="Montermini L."/>
            <person name="Molto M.D."/>
            <person name="Pianese L."/>
            <person name="Cossee M."/>
            <person name="Cavalcanti F."/>
            <person name="Monros E."/>
            <person name="Rodius F."/>
            <person name="Duclos F."/>
            <person name="Monticelli A."/>
            <person name="Zara F."/>
            <person name="Canizares J."/>
            <person name="Koutnikova H."/>
            <person name="Bidichandani S."/>
            <person name="Gellera C."/>
            <person name="Brice A."/>
            <person name="Trouillas P."/>
            <person name="de Michele G."/>
            <person name="Filla A."/>
            <person name="de Frutos R."/>
            <person name="Palau F."/>
            <person name="Patel P.I."/>
            <person name="di Donato S."/>
            <person name="Mandel J.-L."/>
            <person name="Cocozza S."/>
            <person name="Koenig M."/>
            <person name="Pandolfo M."/>
        </authorList>
    </citation>
    <scope>NUCLEOTIDE SEQUENCE [GENOMIC DNA / MRNA] (ISOFORMS 1 AND 2)</scope>
    <scope>ALTERNATIVE SPLICING</scope>
    <scope>VARIANT PHE-154</scope>
</reference>
<reference key="2">
    <citation type="journal article" date="2004" name="Nature">
        <title>DNA sequence and analysis of human chromosome 9.</title>
        <authorList>
            <person name="Humphray S.J."/>
            <person name="Oliver K."/>
            <person name="Hunt A.R."/>
            <person name="Plumb R.W."/>
            <person name="Loveland J.E."/>
            <person name="Howe K.L."/>
            <person name="Andrews T.D."/>
            <person name="Searle S."/>
            <person name="Hunt S.E."/>
            <person name="Scott C.E."/>
            <person name="Jones M.C."/>
            <person name="Ainscough R."/>
            <person name="Almeida J.P."/>
            <person name="Ambrose K.D."/>
            <person name="Ashwell R.I.S."/>
            <person name="Babbage A.K."/>
            <person name="Babbage S."/>
            <person name="Bagguley C.L."/>
            <person name="Bailey J."/>
            <person name="Banerjee R."/>
            <person name="Barker D.J."/>
            <person name="Barlow K.F."/>
            <person name="Bates K."/>
            <person name="Beasley H."/>
            <person name="Beasley O."/>
            <person name="Bird C.P."/>
            <person name="Bray-Allen S."/>
            <person name="Brown A.J."/>
            <person name="Brown J.Y."/>
            <person name="Burford D."/>
            <person name="Burrill W."/>
            <person name="Burton J."/>
            <person name="Carder C."/>
            <person name="Carter N.P."/>
            <person name="Chapman J.C."/>
            <person name="Chen Y."/>
            <person name="Clarke G."/>
            <person name="Clark S.Y."/>
            <person name="Clee C.M."/>
            <person name="Clegg S."/>
            <person name="Collier R.E."/>
            <person name="Corby N."/>
            <person name="Crosier M."/>
            <person name="Cummings A.T."/>
            <person name="Davies J."/>
            <person name="Dhami P."/>
            <person name="Dunn M."/>
            <person name="Dutta I."/>
            <person name="Dyer L.W."/>
            <person name="Earthrowl M.E."/>
            <person name="Faulkner L."/>
            <person name="Fleming C.J."/>
            <person name="Frankish A."/>
            <person name="Frankland J.A."/>
            <person name="French L."/>
            <person name="Fricker D.G."/>
            <person name="Garner P."/>
            <person name="Garnett J."/>
            <person name="Ghori J."/>
            <person name="Gilbert J.G.R."/>
            <person name="Glison C."/>
            <person name="Grafham D.V."/>
            <person name="Gribble S."/>
            <person name="Griffiths C."/>
            <person name="Griffiths-Jones S."/>
            <person name="Grocock R."/>
            <person name="Guy J."/>
            <person name="Hall R.E."/>
            <person name="Hammond S."/>
            <person name="Harley J.L."/>
            <person name="Harrison E.S.I."/>
            <person name="Hart E.A."/>
            <person name="Heath P.D."/>
            <person name="Henderson C.D."/>
            <person name="Hopkins B.L."/>
            <person name="Howard P.J."/>
            <person name="Howden P.J."/>
            <person name="Huckle E."/>
            <person name="Johnson C."/>
            <person name="Johnson D."/>
            <person name="Joy A.A."/>
            <person name="Kay M."/>
            <person name="Keenan S."/>
            <person name="Kershaw J.K."/>
            <person name="Kimberley A.M."/>
            <person name="King A."/>
            <person name="Knights A."/>
            <person name="Laird G.K."/>
            <person name="Langford C."/>
            <person name="Lawlor S."/>
            <person name="Leongamornlert D.A."/>
            <person name="Leversha M."/>
            <person name="Lloyd C."/>
            <person name="Lloyd D.M."/>
            <person name="Lovell J."/>
            <person name="Martin S."/>
            <person name="Mashreghi-Mohammadi M."/>
            <person name="Matthews L."/>
            <person name="McLaren S."/>
            <person name="McLay K.E."/>
            <person name="McMurray A."/>
            <person name="Milne S."/>
            <person name="Nickerson T."/>
            <person name="Nisbett J."/>
            <person name="Nordsiek G."/>
            <person name="Pearce A.V."/>
            <person name="Peck A.I."/>
            <person name="Porter K.M."/>
            <person name="Pandian R."/>
            <person name="Pelan S."/>
            <person name="Phillimore B."/>
            <person name="Povey S."/>
            <person name="Ramsey Y."/>
            <person name="Rand V."/>
            <person name="Scharfe M."/>
            <person name="Sehra H.K."/>
            <person name="Shownkeen R."/>
            <person name="Sims S.K."/>
            <person name="Skuce C.D."/>
            <person name="Smith M."/>
            <person name="Steward C.A."/>
            <person name="Swarbreck D."/>
            <person name="Sycamore N."/>
            <person name="Tester J."/>
            <person name="Thorpe A."/>
            <person name="Tracey A."/>
            <person name="Tromans A."/>
            <person name="Thomas D.W."/>
            <person name="Wall M."/>
            <person name="Wallis J.M."/>
            <person name="West A.P."/>
            <person name="Whitehead S.L."/>
            <person name="Willey D.L."/>
            <person name="Williams S.A."/>
            <person name="Wilming L."/>
            <person name="Wray P.W."/>
            <person name="Young L."/>
            <person name="Ashurst J.L."/>
            <person name="Coulson A."/>
            <person name="Blocker H."/>
            <person name="Durbin R.M."/>
            <person name="Sulston J.E."/>
            <person name="Hubbard T."/>
            <person name="Jackson M.J."/>
            <person name="Bentley D.R."/>
            <person name="Beck S."/>
            <person name="Rogers J."/>
            <person name="Dunham I."/>
        </authorList>
    </citation>
    <scope>NUCLEOTIDE SEQUENCE [LARGE SCALE GENOMIC DNA]</scope>
</reference>
<reference key="3">
    <citation type="journal article" date="2004" name="Genome Res.">
        <title>The status, quality, and expansion of the NIH full-length cDNA project: the Mammalian Gene Collection (MGC).</title>
        <authorList>
            <consortium name="The MGC Project Team"/>
        </authorList>
    </citation>
    <scope>NUCLEOTIDE SEQUENCE [LARGE SCALE MRNA] (ISOFORM 1)</scope>
    <source>
        <tissue>Brain</tissue>
        <tissue>Eye</tissue>
    </source>
</reference>
<reference key="4">
    <citation type="journal article" date="2008" name="Hum. Mol. Genet.">
        <title>The in vivo mitochondrial two-step maturation of human frataxin.</title>
        <authorList>
            <person name="Schmucker S."/>
            <person name="Argentini M."/>
            <person name="Carelle-Calmels N."/>
            <person name="Martelli A."/>
            <person name="Puccio H."/>
        </authorList>
    </citation>
    <scope>PROTEIN SEQUENCE OF 81-90</scope>
    <scope>PROTEOLYTIC PROCESSING</scope>
    <scope>SUBCELLULAR LOCATION</scope>
    <scope>MUTAGENESIS OF 39-ARG-ARG-40; 53-ARG-ARG-54; 78-LEU-ARG-79 AND 79-ARG-LYS-80</scope>
</reference>
<reference key="5">
    <citation type="journal article" date="2007" name="Hum. Mol. Genet.">
        <title>In vivo maturation of human frataxin.</title>
        <authorList>
            <person name="Condo I."/>
            <person name="Ventura N."/>
            <person name="Malisan F."/>
            <person name="Rufini A."/>
            <person name="Tomassini B."/>
            <person name="Testi R."/>
        </authorList>
    </citation>
    <scope>PROTEIN SEQUENCE OF 81-86</scope>
    <scope>PROTEOLYTIC PROCESSING</scope>
    <scope>MUTAGENESIS OF 53-ARG-ARG-54 AND 79-ARG-LYS-80</scope>
    <scope>TISSUE SPECIFICITY</scope>
</reference>
<reference key="6">
    <citation type="journal article" date="2010" name="Hum. Mol. Genet.">
        <title>Molecular control of the cytosolic aconitase/IRP1 switch by extramitochondrial frataxin.</title>
        <authorList>
            <person name="Condo I."/>
            <person name="Malisan F."/>
            <person name="Guccini I."/>
            <person name="Serio D."/>
            <person name="Rufini A."/>
            <person name="Testi R."/>
        </authorList>
    </citation>
    <scope>PROTEIN SEQUENCE OF 81-86</scope>
    <scope>PROTEOLYTIC PROCESSING</scope>
    <scope>FUNCTION</scope>
    <scope>INTERACTION WITH ACO1</scope>
    <scope>SUBCELLULAR LOCATION</scope>
</reference>
<reference key="7">
    <citation type="submission" date="1997-06" db="EMBL/GenBank/DDBJ databases">
        <authorList>
            <person name="Kostrzewa M."/>
        </authorList>
    </citation>
    <scope>NUCLEOTIDE SEQUENCE [GENOMIC DNA] OF 89-128</scope>
    <scope>VARIANT FRDA TYR-122</scope>
</reference>
<reference key="8">
    <citation type="submission" date="1997-11" db="EMBL/GenBank/DDBJ databases">
        <title>A novel splice site mutation (384+1G-A) in the Friedreich's ataxia gene.</title>
        <authorList>
            <person name="Doudney J.D."/>
            <person name="Pook M.A."/>
            <person name="Al-Mahdawi S."/>
            <person name="Carvajal J.J."/>
            <person name="Hillerman R."/>
            <person name="Chamberlain S."/>
        </authorList>
    </citation>
    <scope>NUCLEOTIDE SEQUENCE [GENOMIC DNA] OF 89-128</scope>
    <scope>VARIANT FRDA TYR-122</scope>
</reference>
<reference key="9">
    <citation type="submission" date="1997-03" db="EMBL/GenBank/DDBJ databases">
        <title>Correct sequence in exon 5a of x25: human frataxin (FRDA), F175(TTC)--&gt;Y175(TAC) and W202(TGG)--&gt;S202(TCC).</title>
        <authorList>
            <person name="Laccone F."/>
            <person name="Schloesser M."/>
        </authorList>
    </citation>
    <scope>NUCLEOTIDE SEQUENCE [GENOMIC DNA] OF 162-210</scope>
</reference>
<reference key="10">
    <citation type="journal article" date="1997" name="Hum. Mol. Genet.">
        <title>Frataxin is reduced in Friedreich ataxia patients and is associated with mitochondrial membranes.</title>
        <authorList>
            <person name="Campuzano V."/>
            <person name="Montermini L."/>
            <person name="Lutz Y."/>
            <person name="Cova L."/>
            <person name="Hindelang C."/>
            <person name="Jiralerspong S."/>
            <person name="Trottier Y."/>
            <person name="Kish S.J."/>
            <person name="Faucheux B."/>
            <person name="Trouillas P."/>
            <person name="Authier F.J."/>
            <person name="Duerr A."/>
            <person name="Mandel J.-L."/>
            <person name="Vescovi A."/>
            <person name="Pandolfo M."/>
            <person name="Koenig M."/>
        </authorList>
    </citation>
    <scope>SUBCELLULAR LOCATION</scope>
</reference>
<reference key="11">
    <citation type="journal article" date="1997" name="Nat. Genet.">
        <title>Studies of human, mouse and yeast homologues indicate a mitochondrial function for frataxin.</title>
        <authorList>
            <person name="Koutnikova H."/>
            <person name="Campuzano V."/>
            <person name="Foury F."/>
            <person name="Dolle P."/>
            <person name="Cazzalini O."/>
            <person name="Koenig M."/>
        </authorList>
    </citation>
    <scope>SUBCELLULAR LOCATION</scope>
</reference>
<reference key="12">
    <citation type="journal article" date="1999" name="Hum. Mol. Genet.">
        <title>Maturation of frataxin within mammalian and yeast mitochondria: one-step processing by matrix processing peptidase.</title>
        <authorList>
            <person name="Gordon D.M."/>
            <person name="Shi Q."/>
            <person name="Dancis A."/>
            <person name="Pain D."/>
        </authorList>
    </citation>
    <scope>PROTEOLYTIC PROCESSING</scope>
</reference>
<reference key="13">
    <citation type="journal article" date="1999" name="J. Biol. Chem.">
        <title>Yeast and human frataxin are processed to mature form in two sequential steps by the mitochondrial processing peptidase.</title>
        <authorList>
            <person name="Branda S.S."/>
            <person name="Cavadini P."/>
            <person name="Adamec J."/>
            <person name="Kalousek F."/>
            <person name="Taroni F."/>
            <person name="Isaya G."/>
        </authorList>
    </citation>
    <scope>PROTEOLYTIC PROCESSING</scope>
</reference>
<reference key="14">
    <citation type="journal article" date="2000" name="J. Biol. Chem.">
        <title>Two-step processing of human frataxin by mitochondrial processing peptidase. Precursor and intermediate forms are cleaved at different rates.</title>
        <authorList>
            <person name="Cavadini P."/>
            <person name="Adamec J."/>
            <person name="Taroni F."/>
            <person name="Gakh O."/>
            <person name="Isaya G."/>
        </authorList>
    </citation>
    <scope>PROTEOLYTIC PROCESSING</scope>
</reference>
<reference key="15">
    <citation type="journal article" date="2002" name="Hum. Mol. Genet.">
        <title>Assembly and iron-binding properties of human frataxin, the protein deficient in Friedreich ataxia.</title>
        <authorList>
            <person name="Cavadini P."/>
            <person name="O'Neill H.A."/>
            <person name="Benada O."/>
            <person name="Isaya G."/>
        </authorList>
    </citation>
    <scope>POSSIBLE FUNCTION IN IRON STORAGE</scope>
    <scope>SUBUNIT</scope>
</reference>
<reference key="16">
    <citation type="journal article" date="2003" name="Biochemistry">
        <title>Structure of frataxin iron cores: an X-ray absorption spectroscopic study.</title>
        <authorList>
            <person name="Nichol H."/>
            <person name="Gakh O."/>
            <person name="O'Neill H.A."/>
            <person name="Pickering I.J."/>
            <person name="Isaya G."/>
            <person name="George G.N."/>
        </authorList>
    </citation>
    <scope>POSSIBLE FUNCTION IN IRON STORAGE</scope>
    <scope>SUBUNIT</scope>
</reference>
<reference key="17">
    <citation type="journal article" date="2003" name="J. Am. Chem. Soc.">
        <title>Iron-sulfur cluster biosynthesis. Characterization of frataxin as an iron donor for assembly of [2Fe-2S] clusters in ISU-type proteins.</title>
        <authorList>
            <person name="Yoon T."/>
            <person name="Cowan J.A."/>
        </authorList>
    </citation>
    <scope>FUNCTION IN IRON-SULFUR CLUSTER BIOSYNTHESIS</scope>
    <scope>INTERACTION WITH ISCU</scope>
</reference>
<reference key="18">
    <citation type="journal article" date="2004" name="J. Biol. Chem.">
        <title>Frataxin-mediated iron delivery to ferrochelatase in the final step of heme biosynthesis.</title>
        <authorList>
            <person name="Yoon T."/>
            <person name="Cowan J.A."/>
        </authorList>
    </citation>
    <scope>POSSIBLE FUNCTION IN HEME BIOSYNTHESIS</scope>
    <scope>INTERACTION WITH FECH</scope>
</reference>
<reference key="19">
    <citation type="journal article" date="2004" name="Science">
        <title>Frataxin acts as an iron chaperone protein to modulate mitochondrial aconitase activity.</title>
        <authorList>
            <person name="Bulteau A.L."/>
            <person name="O'Neill H.A."/>
            <person name="Kennedy M.C."/>
            <person name="Ikeda-Saito M."/>
            <person name="Isaya G."/>
            <person name="Szweda L.I."/>
        </authorList>
    </citation>
    <scope>FUNCTION</scope>
</reference>
<reference key="20">
    <citation type="journal article" date="2005" name="Biochemistry">
        <title>Assembly of human frataxin is a mechanism for detoxifying redox-active iron.</title>
        <authorList>
            <person name="O'Neill H.A."/>
            <person name="Gakh O."/>
            <person name="Park S."/>
            <person name="Cui J."/>
            <person name="Mooney S.M."/>
            <person name="Sampson M."/>
            <person name="Ferreira G.C."/>
            <person name="Isaya G."/>
        </authorList>
    </citation>
    <scope>FUNCTION IN OXIDATIVE STRESS</scope>
    <scope>SUBUNIT</scope>
    <scope>CATALYTIC ACTIVITY</scope>
</reference>
<reference key="21">
    <citation type="journal article" date="2005" name="Hum. Mol. Genet.">
        <title>Frataxin interacts functionally with mitochondrial electron transport chain proteins.</title>
        <authorList>
            <person name="Gonzalez-Cabo P."/>
            <person name="Vazquez-Manrique R.P."/>
            <person name="Garcia-Gimeno M.A."/>
            <person name="Sanz P."/>
            <person name="Palau F."/>
        </authorList>
    </citation>
    <scope>INTERACTION WITH SDHA AND SDHB</scope>
</reference>
<reference key="22">
    <citation type="journal article" date="2005" name="Hum. Mol. Genet.">
        <title>Frataxin deficiency alters heme pathway transcripts and decreases mitochondrial heme metabolites in mammalian cells.</title>
        <authorList>
            <person name="Schoenfeld R.A."/>
            <person name="Napoli E."/>
            <person name="Wong A."/>
            <person name="Zhan S."/>
            <person name="Reutenauer L."/>
            <person name="Morin D."/>
            <person name="Buckpitt A.R."/>
            <person name="Taroni F."/>
            <person name="Lonnerdal B."/>
            <person name="Ristow M."/>
            <person name="Puccio H."/>
            <person name="Cortopassi G.A."/>
        </authorList>
    </citation>
    <scope>FUNCTION</scope>
    <scope>INVOLVEMENT IN HEME BIOSYNTHESIS</scope>
</reference>
<reference key="23">
    <citation type="journal article" date="2005" name="J. Cell Sci.">
        <title>Extra-mitochondrial localisation of frataxin and its association with IscU1 during enterocyte-like differentiation of the human colon adenocarcinoma cell line Caco-2.</title>
        <authorList>
            <person name="Acquaviva F."/>
            <person name="De Biase I."/>
            <person name="Nezi L."/>
            <person name="Ruggiero G."/>
            <person name="Tatangelo F."/>
            <person name="Pisano C."/>
            <person name="Monticelli A."/>
            <person name="Garbi C."/>
            <person name="Acquaviva A.M."/>
            <person name="Cocozza S."/>
        </authorList>
    </citation>
    <scope>INTERACTION WITH ISCU (ISOFORM 2)</scope>
    <scope>SUBCELLULAR LOCATION</scope>
    <scope>FUNCTION</scope>
</reference>
<reference key="24">
    <citation type="journal article" date="2005" name="J. Mol. Biol.">
        <title>Supramolecular assemblies of human frataxin are formed via subunit-subunit interactions mediated by a non-conserved amino-terminal region.</title>
        <authorList>
            <person name="O'Neill H.A."/>
            <person name="Gakh O."/>
            <person name="Isaya G."/>
        </authorList>
    </citation>
    <scope>SUBUNIT</scope>
    <scope>SUBCELLULAR LOCATION</scope>
</reference>
<reference key="25">
    <citation type="journal article" date="2006" name="J. Biol. Chem.">
        <title>A pool of extramitochondrial frataxin that promotes cell survival.</title>
        <authorList>
            <person name="Condo I."/>
            <person name="Ventura N."/>
            <person name="Malisan F."/>
            <person name="Tomassini B."/>
            <person name="Testi R."/>
        </authorList>
    </citation>
    <scope>FUNCTION IN CELL SURVIVAL</scope>
    <scope>SUBCELLULAR LOCATION</scope>
</reference>
<reference key="26">
    <citation type="journal article" date="2007" name="Hum. Mol. Genet.">
        <title>Mitochondrial frataxin interacts with ISD11 of the NFS1/ISCU complex and multiple mitochondrial chaperones.</title>
        <authorList>
            <person name="Shan Y."/>
            <person name="Napoli E."/>
            <person name="Cortopassi G."/>
        </authorList>
    </citation>
    <scope>INTERACTION WITH LYRM4 AND HSPA9</scope>
    <scope>CHARACTERIZATION OF VARIANTS PHE-154 AND ARG-155</scope>
</reference>
<reference key="27">
    <citation type="journal article" date="2011" name="BMC Syst. Biol.">
        <title>Initial characterization of the human central proteome.</title>
        <authorList>
            <person name="Burkard T.R."/>
            <person name="Planyavsky M."/>
            <person name="Kaupe I."/>
            <person name="Breitwieser F.P."/>
            <person name="Buerckstuemmer T."/>
            <person name="Bennett K.L."/>
            <person name="Superti-Furga G."/>
            <person name="Colinge J."/>
        </authorList>
    </citation>
    <scope>IDENTIFICATION BY MASS SPECTROMETRY [LARGE SCALE ANALYSIS]</scope>
</reference>
<reference key="28">
    <citation type="journal article" date="2011" name="PLoS ONE">
        <title>Mammalian frataxin: an essential function for cellular viability through an interaction with a preformed ISCU/NFS1/ISD11 iron-sulfur assembly complex.</title>
        <authorList>
            <person name="Schmucker S."/>
            <person name="Martelli A."/>
            <person name="Colin F."/>
            <person name="Page A."/>
            <person name="Wattenhofer-Donze M."/>
            <person name="Reutenauer L."/>
            <person name="Puccio H."/>
        </authorList>
    </citation>
    <scope>COMPONENT OF CORE (FE-S) CLUSTER ASSEMBLY COMPLEX</scope>
    <scope>MUTAGENESIS OF GLU-96; ASP-104; GLU-108; GLU-111; ASP-115; ASP-124; ASN-146 AND TRP-173</scope>
    <scope>SUBCELLULAR LOCATION</scope>
    <scope>PROTEOLYTIC PROCESSING</scope>
    <scope>CHARACTERIZATION OF VARIANTS FRDA TYR-122; VAL-130 AND PHE-154</scope>
</reference>
<reference key="29">
    <citation type="journal article" date="2014" name="Biochemistry">
        <title>Human frataxin activates Fe-S cluster biosynthesis by facilitating sulfur transfer chemistry.</title>
        <authorList>
            <person name="Bridwell-Rabb J."/>
            <person name="Fox N.G."/>
            <person name="Tsai C.L."/>
            <person name="Winn A.M."/>
            <person name="Barondeau D.P."/>
        </authorList>
    </citation>
    <scope>VARIANTS FRDA PHE-154; ARG-155 AND CYS-165</scope>
    <scope>CHARACTERIZATION OF VARIANTS FRDA PHE-154; ARG-155 AND CYS-165</scope>
    <scope>FUNCTION</scope>
</reference>
<reference key="30">
    <citation type="journal article" date="2015" name="Proteomics">
        <title>N-terminome analysis of the human mitochondrial proteome.</title>
        <authorList>
            <person name="Vaca Jacome A.S."/>
            <person name="Rabilloud T."/>
            <person name="Schaeffer-Reiss C."/>
            <person name="Rompais M."/>
            <person name="Ayoub D."/>
            <person name="Lane L."/>
            <person name="Bairoch A."/>
            <person name="Van Dorsselaer A."/>
            <person name="Carapito C."/>
        </authorList>
    </citation>
    <scope>IDENTIFICATION BY MASS SPECTROMETRY [LARGE SCALE ANALYSIS]</scope>
</reference>
<reference key="31">
    <citation type="journal article" date="2016" name="Mitochondrion">
        <title>Mitochondrial Hspa9/Mortalin regulates erythroid differentiation via iron-sulfur cluster assembly.</title>
        <authorList>
            <person name="Shan Y."/>
            <person name="Cortopassi G."/>
        </authorList>
    </citation>
    <scope>INTERACTION WITH HSPA9</scope>
</reference>
<reference key="32">
    <citation type="journal article" date="2018" name="J. Inorg. Biochem.">
        <title>Interactions of iron-bound frataxin with ISCU and ferredoxin on the cysteine desulfurase complex leading to Fe-S cluster assembly.</title>
        <authorList>
            <person name="Cai K."/>
            <person name="Frederick R.O."/>
            <person name="Tonelli M."/>
            <person name="Markley J.L."/>
        </authorList>
    </citation>
    <scope>INTERACTION WITH THE CYSTEINE DESULFURASE COMPLEX AND ISCU</scope>
    <scope>FUNCTION</scope>
</reference>
<reference key="33">
    <citation type="journal article" date="2000" name="J. Biol. Chem.">
        <title>Crystal structure of human frataxin.</title>
        <authorList>
            <person name="Dhe-Paganon S."/>
            <person name="Shigeta R."/>
            <person name="Chi Y.-I."/>
            <person name="Ristow M."/>
            <person name="Shoelson S.E."/>
        </authorList>
    </citation>
    <scope>X-RAY CRYSTALLOGRAPHY (1.8 ANGSTROMS) OF 88-210</scope>
</reference>
<reference key="34">
    <citation type="journal article" date="2000" name="Structure">
        <title>Towards a structural understanding of Friedreich's ataxia: the solution structure of frataxin.</title>
        <authorList>
            <person name="Musco G."/>
            <person name="Stier G."/>
            <person name="Kolmerer B."/>
            <person name="Adinolfi S."/>
            <person name="Martin S."/>
            <person name="Frenkiel T."/>
            <person name="Gibson T."/>
            <person name="Pastore A."/>
        </authorList>
    </citation>
    <scope>STRUCTURE BY NMR OF 91-210</scope>
</reference>
<reference evidence="45" key="35">
    <citation type="journal article" date="2019" name="Nat. Commun.">
        <title>Structure of the human frataxin-bound iron-sulfur cluster assembly complex provides insight into its activation mechanism.</title>
        <authorList>
            <person name="Fox N.G."/>
            <person name="Yu X."/>
            <person name="Feng X."/>
            <person name="Bailey H.J."/>
            <person name="Martelli A."/>
            <person name="Nabhan J.F."/>
            <person name="Strain-Damerell C."/>
            <person name="Bulawa C."/>
            <person name="Yue W.W."/>
            <person name="Han S."/>
        </authorList>
    </citation>
    <scope>STRUCTURE BY ELECTRON MICROSCOPY (3.20 ANGSTROMS) OF 81-210 IN COMPLEX WITH ISCU; LYRM4 AND FNS1</scope>
    <scope>SUBUNIT</scope>
    <scope>VARIANTS FRDA ARG-155 AND CYS-165</scope>
    <scope>CHARACTERIZATION OF VARIANTS FRDA ARG-155 AND CYS-165</scope>
    <scope>INTERACTION WITH ISCU</scope>
</reference>
<reference key="36">
    <citation type="journal article" date="1997" name="Am. J. Hum. Genet.">
        <title>Atypical Friedreich ataxia caused by compound heterozygosity for a novel missense mutation and the GAA triplet-repeat expansion.</title>
        <authorList>
            <person name="Bidichandani S.I."/>
            <person name="Ashizawa T."/>
            <person name="Patel P.I."/>
        </authorList>
    </citation>
    <scope>VARIANTS FRDA VAL-130 AND PHE-154</scope>
</reference>
<reference key="37">
    <citation type="journal article" date="1998" name="Am. J. Med. Genet.">
        <title>Identification of a missense mutation in a Friedreich's ataxia patient: implications for diagnosis and carrier studies.</title>
        <authorList>
            <person name="Bartolo C."/>
            <person name="Mendell J.R."/>
            <person name="Prior T.W."/>
        </authorList>
    </citation>
    <scope>VARIANT FRDA SER-106</scope>
</reference>
<reference key="38">
    <citation type="journal article" date="1998" name="Neurogenetics">
        <title>The correlation of clinical phenotype in Friedreich ataxia with the site of point mutations in the FRDA gene.</title>
        <authorList>
            <person name="Forrest S.M."/>
            <person name="Knight M."/>
            <person name="Delatycki M.B."/>
            <person name="Paris D."/>
            <person name="Williamson R."/>
            <person name="King J."/>
            <person name="Yeung L."/>
            <person name="Nassif N."/>
            <person name="Nicholson G.A."/>
        </authorList>
    </citation>
    <scope>VARIANTS FRDA VAL-130; CYS-165 AND PHE-182</scope>
</reference>
<reference key="39">
    <citation type="journal article" date="1999" name="Ann. Neurol.">
        <title>Friedreich's ataxia: point mutations and clinical presentation of compound heterozygotes.</title>
        <authorList>
            <person name="Cossee M."/>
            <person name="Duerr A."/>
            <person name="Schmitt M."/>
            <person name="Dahl N."/>
            <person name="Trouillas P."/>
            <person name="Allinson P."/>
            <person name="Kostrzewa M."/>
            <person name="Nivelon-Chevallier A."/>
            <person name="Gustavson K.-H."/>
            <person name="Kohlschuetter A."/>
            <person name="Mueller U."/>
            <person name="Mandel J.-L."/>
            <person name="Brice A."/>
            <person name="Koenig M."/>
            <person name="Cavalcanti F."/>
            <person name="Tammaro A."/>
            <person name="de Michele G."/>
            <person name="Filla A."/>
            <person name="Cocozza S."/>
            <person name="Labuda M."/>
            <person name="Montermini L."/>
            <person name="Poirier J."/>
            <person name="Pandolfo M."/>
        </authorList>
    </citation>
    <scope>VARIANTS FRDA TYR-122 AND VAL-130</scope>
</reference>
<reference key="40">
    <citation type="journal article" date="1999" name="Hum. Mutat.">
        <title>A missense mutation (W155R) in an American patient with Friedreich's ataxia.</title>
        <authorList>
            <person name="Labuda M."/>
            <person name="Poirier J."/>
            <person name="Pandolfo M."/>
        </authorList>
    </citation>
    <scope>VARIANT FRDA ARG-155</scope>
</reference>
<reference key="41">
    <citation type="journal article" date="2000" name="Hum. Mutat.">
        <title>A novel missense mutation (L198R) in the Friedreich's ataxia gene.</title>
        <authorList>
            <person name="Al-Mahdawi S."/>
            <person name="Pook M."/>
            <person name="Chamberlain S."/>
        </authorList>
    </citation>
    <scope>VARIANT FRDA ARG-198</scope>
</reference>
<reference key="42">
    <citation type="journal article" date="2009" name="PLoS ONE">
        <title>The first cellular models based on frataxin missense mutations that reproduce spontaneously the defects associated with Friedreich ataxia.</title>
        <authorList>
            <person name="Calmels N."/>
            <person name="Schmucker S."/>
            <person name="Wattenhofer-Donze M."/>
            <person name="Martelli A."/>
            <person name="Vaucamps N."/>
            <person name="Reutenauer L."/>
            <person name="Messaddeq N."/>
            <person name="Bouton C."/>
            <person name="Koenig M."/>
            <person name="Puccio H."/>
        </authorList>
    </citation>
    <scope>CHARACTERIZATION OF VARIANT FRDA PHE-154</scope>
</reference>